<gene>
    <name evidence="1" type="primary">der</name>
    <name type="synonym">engA</name>
    <name type="ordered locus">BUAP5A_599</name>
</gene>
<organism>
    <name type="scientific">Buchnera aphidicola subsp. Acyrthosiphon pisum (strain 5A)</name>
    <dbReference type="NCBI Taxonomy" id="563178"/>
    <lineage>
        <taxon>Bacteria</taxon>
        <taxon>Pseudomonadati</taxon>
        <taxon>Pseudomonadota</taxon>
        <taxon>Gammaproteobacteria</taxon>
        <taxon>Enterobacterales</taxon>
        <taxon>Erwiniaceae</taxon>
        <taxon>Buchnera</taxon>
    </lineage>
</organism>
<dbReference type="EMBL" id="CP001161">
    <property type="protein sequence ID" value="ACL30940.1"/>
    <property type="molecule type" value="Genomic_DNA"/>
</dbReference>
<dbReference type="RefSeq" id="WP_009874554.1">
    <property type="nucleotide sequence ID" value="NC_011833.1"/>
</dbReference>
<dbReference type="SMR" id="B8D8G4"/>
<dbReference type="KEGG" id="bap:BUAP5A_599"/>
<dbReference type="HOGENOM" id="CLU_016077_5_1_6"/>
<dbReference type="OrthoDB" id="9805918at2"/>
<dbReference type="Proteomes" id="UP000006904">
    <property type="component" value="Chromosome"/>
</dbReference>
<dbReference type="GO" id="GO:0005525">
    <property type="term" value="F:GTP binding"/>
    <property type="evidence" value="ECO:0007669"/>
    <property type="project" value="UniProtKB-UniRule"/>
</dbReference>
<dbReference type="GO" id="GO:0043022">
    <property type="term" value="F:ribosome binding"/>
    <property type="evidence" value="ECO:0007669"/>
    <property type="project" value="TreeGrafter"/>
</dbReference>
<dbReference type="GO" id="GO:0042254">
    <property type="term" value="P:ribosome biogenesis"/>
    <property type="evidence" value="ECO:0007669"/>
    <property type="project" value="UniProtKB-KW"/>
</dbReference>
<dbReference type="CDD" id="cd01894">
    <property type="entry name" value="EngA1"/>
    <property type="match status" value="1"/>
</dbReference>
<dbReference type="CDD" id="cd01895">
    <property type="entry name" value="EngA2"/>
    <property type="match status" value="1"/>
</dbReference>
<dbReference type="FunFam" id="3.30.300.20:FF:000004">
    <property type="entry name" value="GTPase Der"/>
    <property type="match status" value="1"/>
</dbReference>
<dbReference type="Gene3D" id="3.30.300.20">
    <property type="match status" value="1"/>
</dbReference>
<dbReference type="Gene3D" id="3.40.50.300">
    <property type="entry name" value="P-loop containing nucleotide triphosphate hydrolases"/>
    <property type="match status" value="2"/>
</dbReference>
<dbReference type="HAMAP" id="MF_00195">
    <property type="entry name" value="GTPase_Der"/>
    <property type="match status" value="1"/>
</dbReference>
<dbReference type="InterPro" id="IPR031166">
    <property type="entry name" value="G_ENGA"/>
</dbReference>
<dbReference type="InterPro" id="IPR006073">
    <property type="entry name" value="GTP-bd"/>
</dbReference>
<dbReference type="InterPro" id="IPR016484">
    <property type="entry name" value="GTPase_Der"/>
</dbReference>
<dbReference type="InterPro" id="IPR032859">
    <property type="entry name" value="KH_dom-like"/>
</dbReference>
<dbReference type="InterPro" id="IPR015946">
    <property type="entry name" value="KH_dom-like_a/b"/>
</dbReference>
<dbReference type="InterPro" id="IPR027417">
    <property type="entry name" value="P-loop_NTPase"/>
</dbReference>
<dbReference type="InterPro" id="IPR005225">
    <property type="entry name" value="Small_GTP-bd"/>
</dbReference>
<dbReference type="NCBIfam" id="TIGR03594">
    <property type="entry name" value="GTPase_EngA"/>
    <property type="match status" value="1"/>
</dbReference>
<dbReference type="NCBIfam" id="TIGR00231">
    <property type="entry name" value="small_GTP"/>
    <property type="match status" value="2"/>
</dbReference>
<dbReference type="PANTHER" id="PTHR43834">
    <property type="entry name" value="GTPASE DER"/>
    <property type="match status" value="1"/>
</dbReference>
<dbReference type="PANTHER" id="PTHR43834:SF6">
    <property type="entry name" value="GTPASE DER"/>
    <property type="match status" value="1"/>
</dbReference>
<dbReference type="Pfam" id="PF14714">
    <property type="entry name" value="KH_dom-like"/>
    <property type="match status" value="1"/>
</dbReference>
<dbReference type="Pfam" id="PF01926">
    <property type="entry name" value="MMR_HSR1"/>
    <property type="match status" value="2"/>
</dbReference>
<dbReference type="PIRSF" id="PIRSF006485">
    <property type="entry name" value="GTP-binding_EngA"/>
    <property type="match status" value="1"/>
</dbReference>
<dbReference type="PRINTS" id="PR00326">
    <property type="entry name" value="GTP1OBG"/>
</dbReference>
<dbReference type="SUPFAM" id="SSF52540">
    <property type="entry name" value="P-loop containing nucleoside triphosphate hydrolases"/>
    <property type="match status" value="2"/>
</dbReference>
<dbReference type="PROSITE" id="PS51712">
    <property type="entry name" value="G_ENGA"/>
    <property type="match status" value="2"/>
</dbReference>
<sequence length="453" mass="51899">MIPIIVLIGRTNVGKSTLFNVLTKTRDALVANYPGITRDRQYGYCKLQSNKKIILIDTAGLDIKLNEIEKQAQAQTLIAIKEAHLILFLVNARDGLMPQEYEISKNIRKYQKKTILVINKIDGINEASKINEFYSLGFEKIQKISASHNQGINTLINRYLIPWISEKFKKKITENLYKDTELKKIAIKVAFIGRPNVGKSTLINGILKEERMITSNTPGTTLDSISTPIKYNYENYTLIDTAGASKKKKKINDFQRFSIIKTLQTIEKSNVILLIIDASLQTCHQDLSLADFIIHSGKGIVVVVNKCDLFNSVELKKIKELIKSKLKFLYFSKIHFISALYKKGIFQLFKSIKESYEDSKRKISTSTLIKTMHIAIKKHQPPIIKGRRIKLKYAHLGSSNPPKIIIHGNQVKYLSLPYKRYLINFFYKTLKIKGTPIQIQFKDNENPYVKNKN</sequence>
<evidence type="ECO:0000255" key="1">
    <source>
        <dbReference type="HAMAP-Rule" id="MF_00195"/>
    </source>
</evidence>
<protein>
    <recommendedName>
        <fullName evidence="1">GTPase Der</fullName>
    </recommendedName>
    <alternativeName>
        <fullName evidence="1">GTP-binding protein EngA</fullName>
    </alternativeName>
</protein>
<feature type="chain" id="PRO_1000124345" description="GTPase Der">
    <location>
        <begin position="1"/>
        <end position="453"/>
    </location>
</feature>
<feature type="domain" description="EngA-type G 1">
    <location>
        <begin position="3"/>
        <end position="167"/>
    </location>
</feature>
<feature type="domain" description="EngA-type G 2">
    <location>
        <begin position="187"/>
        <end position="360"/>
    </location>
</feature>
<feature type="domain" description="KH-like" evidence="1">
    <location>
        <begin position="361"/>
        <end position="445"/>
    </location>
</feature>
<feature type="binding site" evidence="1">
    <location>
        <begin position="9"/>
        <end position="16"/>
    </location>
    <ligand>
        <name>GTP</name>
        <dbReference type="ChEBI" id="CHEBI:37565"/>
        <label>1</label>
    </ligand>
</feature>
<feature type="binding site" evidence="1">
    <location>
        <begin position="57"/>
        <end position="61"/>
    </location>
    <ligand>
        <name>GTP</name>
        <dbReference type="ChEBI" id="CHEBI:37565"/>
        <label>1</label>
    </ligand>
</feature>
<feature type="binding site" evidence="1">
    <location>
        <begin position="119"/>
        <end position="122"/>
    </location>
    <ligand>
        <name>GTP</name>
        <dbReference type="ChEBI" id="CHEBI:37565"/>
        <label>1</label>
    </ligand>
</feature>
<feature type="binding site" evidence="1">
    <location>
        <begin position="193"/>
        <end position="200"/>
    </location>
    <ligand>
        <name>GTP</name>
        <dbReference type="ChEBI" id="CHEBI:37565"/>
        <label>2</label>
    </ligand>
</feature>
<feature type="binding site" evidence="1">
    <location>
        <begin position="240"/>
        <end position="244"/>
    </location>
    <ligand>
        <name>GTP</name>
        <dbReference type="ChEBI" id="CHEBI:37565"/>
        <label>2</label>
    </ligand>
</feature>
<feature type="binding site" evidence="1">
    <location>
        <begin position="305"/>
        <end position="308"/>
    </location>
    <ligand>
        <name>GTP</name>
        <dbReference type="ChEBI" id="CHEBI:37565"/>
        <label>2</label>
    </ligand>
</feature>
<proteinExistence type="inferred from homology"/>
<keyword id="KW-0342">GTP-binding</keyword>
<keyword id="KW-0547">Nucleotide-binding</keyword>
<keyword id="KW-0677">Repeat</keyword>
<keyword id="KW-0690">Ribosome biogenesis</keyword>
<accession>B8D8G4</accession>
<reference key="1">
    <citation type="journal article" date="2009" name="Science">
        <title>The dynamics and time scale of ongoing genomic erosion in symbiotic bacteria.</title>
        <authorList>
            <person name="Moran N.A."/>
            <person name="McLaughlin H.J."/>
            <person name="Sorek R."/>
        </authorList>
    </citation>
    <scope>NUCLEOTIDE SEQUENCE [LARGE SCALE GENOMIC DNA]</scope>
    <source>
        <strain>5A</strain>
    </source>
</reference>
<comment type="function">
    <text evidence="1">GTPase that plays an essential role in the late steps of ribosome biogenesis.</text>
</comment>
<comment type="subunit">
    <text evidence="1">Associates with the 50S ribosomal subunit.</text>
</comment>
<comment type="similarity">
    <text evidence="1">Belongs to the TRAFAC class TrmE-Era-EngA-EngB-Septin-like GTPase superfamily. EngA (Der) GTPase family.</text>
</comment>
<name>DER_BUCA5</name>